<reference key="1">
    <citation type="submission" date="2005-08" db="EMBL/GenBank/DDBJ databases">
        <title>Complete sequence of chromosome 1 of Nitrosospira multiformis ATCC 25196.</title>
        <authorList>
            <person name="Copeland A."/>
            <person name="Lucas S."/>
            <person name="Lapidus A."/>
            <person name="Barry K."/>
            <person name="Detter J.C."/>
            <person name="Glavina T."/>
            <person name="Hammon N."/>
            <person name="Israni S."/>
            <person name="Pitluck S."/>
            <person name="Chain P."/>
            <person name="Malfatti S."/>
            <person name="Shin M."/>
            <person name="Vergez L."/>
            <person name="Schmutz J."/>
            <person name="Larimer F."/>
            <person name="Land M."/>
            <person name="Hauser L."/>
            <person name="Kyrpides N."/>
            <person name="Lykidis A."/>
            <person name="Richardson P."/>
        </authorList>
    </citation>
    <scope>NUCLEOTIDE SEQUENCE [LARGE SCALE GENOMIC DNA]</scope>
    <source>
        <strain>ATCC 25196 / NCIMB 11849 / C 71</strain>
    </source>
</reference>
<protein>
    <recommendedName>
        <fullName evidence="1">ATP synthase subunit b 1</fullName>
    </recommendedName>
    <alternativeName>
        <fullName evidence="1">ATP synthase F(0) sector subunit b 1</fullName>
    </alternativeName>
    <alternativeName>
        <fullName evidence="1">ATPase subunit I 1</fullName>
    </alternativeName>
    <alternativeName>
        <fullName evidence="1">F-type ATPase subunit b 1</fullName>
        <shortName evidence="1">F-ATPase subunit b 1</shortName>
    </alternativeName>
</protein>
<keyword id="KW-0066">ATP synthesis</keyword>
<keyword id="KW-0997">Cell inner membrane</keyword>
<keyword id="KW-1003">Cell membrane</keyword>
<keyword id="KW-0138">CF(0)</keyword>
<keyword id="KW-0375">Hydrogen ion transport</keyword>
<keyword id="KW-0406">Ion transport</keyword>
<keyword id="KW-0472">Membrane</keyword>
<keyword id="KW-1185">Reference proteome</keyword>
<keyword id="KW-0812">Transmembrane</keyword>
<keyword id="KW-1133">Transmembrane helix</keyword>
<keyword id="KW-0813">Transport</keyword>
<name>ATPF1_NITMU</name>
<accession>Q2YCA7</accession>
<organism>
    <name type="scientific">Nitrosospira multiformis (strain ATCC 25196 / NCIMB 11849 / C 71)</name>
    <dbReference type="NCBI Taxonomy" id="323848"/>
    <lineage>
        <taxon>Bacteria</taxon>
        <taxon>Pseudomonadati</taxon>
        <taxon>Pseudomonadota</taxon>
        <taxon>Betaproteobacteria</taxon>
        <taxon>Nitrosomonadales</taxon>
        <taxon>Nitrosomonadaceae</taxon>
        <taxon>Nitrosospira</taxon>
    </lineage>
</organism>
<gene>
    <name evidence="1" type="primary">atpF1</name>
    <name type="ordered locus">Nmul_A0306</name>
</gene>
<dbReference type="EMBL" id="CP000103">
    <property type="protein sequence ID" value="ABB73614.1"/>
    <property type="molecule type" value="Genomic_DNA"/>
</dbReference>
<dbReference type="RefSeq" id="WP_011379668.1">
    <property type="nucleotide sequence ID" value="NC_007614.1"/>
</dbReference>
<dbReference type="SMR" id="Q2YCA7"/>
<dbReference type="STRING" id="323848.Nmul_A0306"/>
<dbReference type="KEGG" id="nmu:Nmul_A0306"/>
<dbReference type="eggNOG" id="COG0711">
    <property type="taxonomic scope" value="Bacteria"/>
</dbReference>
<dbReference type="HOGENOM" id="CLU_079215_4_5_4"/>
<dbReference type="OrthoDB" id="9788020at2"/>
<dbReference type="Proteomes" id="UP000002718">
    <property type="component" value="Chromosome"/>
</dbReference>
<dbReference type="GO" id="GO:0005886">
    <property type="term" value="C:plasma membrane"/>
    <property type="evidence" value="ECO:0007669"/>
    <property type="project" value="UniProtKB-SubCell"/>
</dbReference>
<dbReference type="GO" id="GO:0045259">
    <property type="term" value="C:proton-transporting ATP synthase complex"/>
    <property type="evidence" value="ECO:0007669"/>
    <property type="project" value="UniProtKB-KW"/>
</dbReference>
<dbReference type="GO" id="GO:0046933">
    <property type="term" value="F:proton-transporting ATP synthase activity, rotational mechanism"/>
    <property type="evidence" value="ECO:0007669"/>
    <property type="project" value="UniProtKB-UniRule"/>
</dbReference>
<dbReference type="GO" id="GO:0046961">
    <property type="term" value="F:proton-transporting ATPase activity, rotational mechanism"/>
    <property type="evidence" value="ECO:0007669"/>
    <property type="project" value="TreeGrafter"/>
</dbReference>
<dbReference type="CDD" id="cd06503">
    <property type="entry name" value="ATP-synt_Fo_b"/>
    <property type="match status" value="1"/>
</dbReference>
<dbReference type="FunFam" id="1.20.5.620:FF:000001">
    <property type="entry name" value="ATP synthase subunit b"/>
    <property type="match status" value="1"/>
</dbReference>
<dbReference type="Gene3D" id="1.20.5.620">
    <property type="entry name" value="F1F0 ATP synthase subunit B, membrane domain"/>
    <property type="match status" value="1"/>
</dbReference>
<dbReference type="HAMAP" id="MF_01398">
    <property type="entry name" value="ATP_synth_b_bprime"/>
    <property type="match status" value="1"/>
</dbReference>
<dbReference type="InterPro" id="IPR028987">
    <property type="entry name" value="ATP_synth_B-like_membr_sf"/>
</dbReference>
<dbReference type="InterPro" id="IPR002146">
    <property type="entry name" value="ATP_synth_b/b'su_bac/chlpt"/>
</dbReference>
<dbReference type="InterPro" id="IPR005864">
    <property type="entry name" value="ATP_synth_F0_bsu_bac"/>
</dbReference>
<dbReference type="InterPro" id="IPR050059">
    <property type="entry name" value="ATP_synthase_B_chain"/>
</dbReference>
<dbReference type="NCBIfam" id="TIGR01144">
    <property type="entry name" value="ATP_synt_b"/>
    <property type="match status" value="1"/>
</dbReference>
<dbReference type="NCBIfam" id="NF004411">
    <property type="entry name" value="PRK05759.1-2"/>
    <property type="match status" value="1"/>
</dbReference>
<dbReference type="PANTHER" id="PTHR33445:SF1">
    <property type="entry name" value="ATP SYNTHASE SUBUNIT B"/>
    <property type="match status" value="1"/>
</dbReference>
<dbReference type="PANTHER" id="PTHR33445">
    <property type="entry name" value="ATP SYNTHASE SUBUNIT B', CHLOROPLASTIC"/>
    <property type="match status" value="1"/>
</dbReference>
<dbReference type="Pfam" id="PF00430">
    <property type="entry name" value="ATP-synt_B"/>
    <property type="match status" value="1"/>
</dbReference>
<dbReference type="SUPFAM" id="SSF81573">
    <property type="entry name" value="F1F0 ATP synthase subunit B, membrane domain"/>
    <property type="match status" value="1"/>
</dbReference>
<comment type="function">
    <text evidence="1">F(1)F(0) ATP synthase produces ATP from ADP in the presence of a proton or sodium gradient. F-type ATPases consist of two structural domains, F(1) containing the extramembraneous catalytic core and F(0) containing the membrane proton channel, linked together by a central stalk and a peripheral stalk. During catalysis, ATP synthesis in the catalytic domain of F(1) is coupled via a rotary mechanism of the central stalk subunits to proton translocation.</text>
</comment>
<comment type="function">
    <text evidence="1">Component of the F(0) channel, it forms part of the peripheral stalk, linking F(1) to F(0).</text>
</comment>
<comment type="subunit">
    <text evidence="1">F-type ATPases have 2 components, F(1) - the catalytic core - and F(0) - the membrane proton channel. F(1) has five subunits: alpha(3), beta(3), gamma(1), delta(1), epsilon(1). F(0) has three main subunits: a(1), b(2) and c(10-14). The alpha and beta chains form an alternating ring which encloses part of the gamma chain. F(1) is attached to F(0) by a central stalk formed by the gamma and epsilon chains, while a peripheral stalk is formed by the delta and b chains.</text>
</comment>
<comment type="subcellular location">
    <subcellularLocation>
        <location evidence="1">Cell inner membrane</location>
        <topology evidence="1">Single-pass membrane protein</topology>
    </subcellularLocation>
</comment>
<comment type="similarity">
    <text evidence="1">Belongs to the ATPase B chain family.</text>
</comment>
<sequence>MNINFTLISQAMAFAIFIWFTVRFVWPPLMRAIENRQKTIAEGLAAGERGKRELELASQRSGDVVREAKQRASDIIAQAEKRAAEIVDEAKVAAREEGDRILVGAKAEVEQEVFRAKEVLRQQVAGLALAGAAKILRREVDEKAHAELLASLKAEL</sequence>
<proteinExistence type="inferred from homology"/>
<evidence type="ECO:0000255" key="1">
    <source>
        <dbReference type="HAMAP-Rule" id="MF_01398"/>
    </source>
</evidence>
<feature type="chain" id="PRO_0000368631" description="ATP synthase subunit b 1">
    <location>
        <begin position="1"/>
        <end position="156"/>
    </location>
</feature>
<feature type="transmembrane region" description="Helical" evidence="1">
    <location>
        <begin position="5"/>
        <end position="27"/>
    </location>
</feature>